<evidence type="ECO:0000250" key="1">
    <source>
        <dbReference type="UniProtKB" id="P0A940"/>
    </source>
</evidence>
<evidence type="ECO:0000255" key="2"/>
<evidence type="ECO:0000255" key="3">
    <source>
        <dbReference type="PROSITE-ProRule" id="PRU01115"/>
    </source>
</evidence>
<evidence type="ECO:0000256" key="4">
    <source>
        <dbReference type="SAM" id="MobiDB-lite"/>
    </source>
</evidence>
<evidence type="ECO:0000269" key="5">
    <source>
    </source>
</evidence>
<evidence type="ECO:0000269" key="6">
    <source>
    </source>
</evidence>
<evidence type="ECO:0000269" key="7">
    <source>
    </source>
</evidence>
<evidence type="ECO:0000269" key="8">
    <source>
    </source>
</evidence>
<evidence type="ECO:0000303" key="9">
    <source>
    </source>
</evidence>
<evidence type="ECO:0000303" key="10">
    <source>
    </source>
</evidence>
<evidence type="ECO:0000305" key="11"/>
<evidence type="ECO:0000305" key="12">
    <source>
    </source>
</evidence>
<evidence type="ECO:0000305" key="13">
    <source>
    </source>
</evidence>
<reference key="1">
    <citation type="journal article" date="1998" name="Science">
        <title>Complete genome sequence of Treponema pallidum, the syphilis spirochete.</title>
        <authorList>
            <person name="Fraser C.M."/>
            <person name="Norris S.J."/>
            <person name="Weinstock G.M."/>
            <person name="White O."/>
            <person name="Sutton G.G."/>
            <person name="Dodson R.J."/>
            <person name="Gwinn M.L."/>
            <person name="Hickey E.K."/>
            <person name="Clayton R.A."/>
            <person name="Ketchum K.A."/>
            <person name="Sodergren E."/>
            <person name="Hardham J.M."/>
            <person name="McLeod M.P."/>
            <person name="Salzberg S.L."/>
            <person name="Peterson J.D."/>
            <person name="Khalak H.G."/>
            <person name="Richardson D.L."/>
            <person name="Howell J.K."/>
            <person name="Chidambaram M."/>
            <person name="Utterback T.R."/>
            <person name="McDonald L.A."/>
            <person name="Artiach P."/>
            <person name="Bowman C."/>
            <person name="Cotton M.D."/>
            <person name="Fujii C."/>
            <person name="Garland S.A."/>
            <person name="Hatch B."/>
            <person name="Horst K."/>
            <person name="Roberts K.M."/>
            <person name="Sandusky M."/>
            <person name="Weidman J.F."/>
            <person name="Smith H.O."/>
            <person name="Venter J.C."/>
        </authorList>
    </citation>
    <scope>NUCLEOTIDE SEQUENCE [LARGE SCALE GENOMIC DNA]</scope>
    <source>
        <strain>Nichols</strain>
    </source>
</reference>
<reference key="2">
    <citation type="journal article" date="2013" name="PLoS ONE">
        <title>Resequencing of Treponema pallidum ssp. pallidum strains Nichols and SS14: correction of sequencing errors resulted in increased separation of syphilis treponeme subclusters.</title>
        <authorList>
            <person name="Petrosova H."/>
            <person name="Pospisilova P."/>
            <person name="Strouhal M."/>
            <person name="Cejkova D."/>
            <person name="Zobanikova M."/>
            <person name="Mikalova L."/>
            <person name="Sodergren E."/>
            <person name="Weinstock G.M."/>
            <person name="Smajs D."/>
        </authorList>
    </citation>
    <scope>NUCLEOTIDE SEQUENCE [LARGE SCALE GENOMIC DNA]</scope>
    <source>
        <strain>Nichols</strain>
    </source>
</reference>
<reference key="3">
    <citation type="journal article" date="2003" name="J. Clin. Microbiol.">
        <title>Serodiagnosis of syphilis: antibodies to recombinant Tp0453, Tp92, and Gpd proteins are sensitive and specific indicators of infection by Treponema pallidum.</title>
        <authorList>
            <person name="Van Voorhis W.C."/>
            <person name="Barrett L.K."/>
            <person name="Lukehart S.A."/>
            <person name="Schmidt B."/>
            <person name="Schriefer M."/>
            <person name="Cameron C.E."/>
        </authorList>
    </citation>
    <scope>BIOTECHNOLOGY</scope>
</reference>
<reference key="4">
    <citation type="journal article" date="2011" name="Mol. Microbiol.">
        <title>TP0326, a Treponema pallidum beta-barrel assembly machinery A (BamA) orthologue and rare outer membrane protein.</title>
        <authorList>
            <person name="Desrosiers D.C."/>
            <person name="Anand A."/>
            <person name="Luthra A."/>
            <person name="Dunham-Ems S.M."/>
            <person name="LeDoyt M."/>
            <person name="Cummings M.A."/>
            <person name="Eshghi A."/>
            <person name="Cameron C.E."/>
            <person name="Cruz A.R."/>
            <person name="Salazar J.C."/>
            <person name="Caimano M.J."/>
            <person name="Radolf J.D."/>
        </authorList>
    </citation>
    <scope>FUNCTION IN HOST IMMUNE SYSTEM RESPONSE</scope>
    <scope>SUBUNIT</scope>
    <scope>SUBCELLULAR LOCATION</scope>
    <scope>INDUCTION</scope>
    <scope>DOMAIN</scope>
    <scope>TOPOLOGY</scope>
    <source>
        <strain>Nichols-Farmington</strain>
    </source>
</reference>
<reference key="5">
    <citation type="journal article" date="2013" name="J. Clin. Microbiol.">
        <title>New proteins for a new perspective on syphilis diagnosis.</title>
        <authorList>
            <person name="Smith B.C."/>
            <person name="Simpson Y."/>
            <person name="Morshed M.G."/>
            <person name="Cowen L.L."/>
            <person name="Hof R."/>
            <person name="Wetherell C."/>
            <person name="Cameron C.E."/>
        </authorList>
    </citation>
    <scope>BIOTECHNOLOGY</scope>
    <source>
        <strain>Nichols</strain>
    </source>
</reference>
<reference key="6">
    <citation type="journal article" date="2015" name="J. Bacteriol.">
        <title>A homology model reveals novel structural features and an immunodominant surface loop/opsonic target in the Treponema pallidum BamA ortholog TP_0326.</title>
        <authorList>
            <person name="Luthra A."/>
            <person name="Anand A."/>
            <person name="Hawley K.L."/>
            <person name="LeDoyt M."/>
            <person name="La Vake C.J."/>
            <person name="Caimano M.J."/>
            <person name="Cruz A.R."/>
            <person name="Salazar J.C."/>
            <person name="Radolf J.D."/>
        </authorList>
    </citation>
    <scope>FUNCTION IN HOST IMMUNE SYSTEM RESPONSE</scope>
    <scope>SUBCELLULAR LOCATION</scope>
    <scope>STRUCTURE MODEL</scope>
    <scope>TOPOLOGY</scope>
    <scope>EXPRESSION IN E.COLI</scope>
    <source>
        <strain>Nichols-Farmington</strain>
    </source>
</reference>
<sequence length="837" mass="94267">MLKKASAFLIASCCVMSLAWAQANDNWYEGKPISAISFEGLEYIARGQLDTIFSQYKGQKWTYELYLEILQKVYDLEYFSEVSPKAVPTDPEYQYVMLQFTVKERPSVKGIKMVGNSQIRSGDLLSKILLKKGDIYNEVKMKVDQESLRRHYLDQGYAAVKISCEAKTEAGGVVVQFTIQEGKQTVVSRIQFKGNKAFTESVLKKVLSTQEARFLTSGVFKENALEADKAAVHSYYAERGYIDARVEGVAKTVDKKTDASRNLVTLTYTVVEGEQYRYGGVTIVGNQIFSTEELQAKIRLKRGAIMNMVAFEQGFQALADAYFENGYTSNYLNKEEHRDTAEKTLSFKITVVERERSHVEHIIIKGTKNTKDEVILREMLLKPGDVFSKSKFTDSLRNLFNLRYFSSLVPDVRPGSEQDLVDIILNVEEQSTANVQFGVTFSGVGEAGTFPLSLFCQWEEKNFLGKGNEISVNATLGSEAQSLKLGYVERWFLGSPLTVGFDFELTHKNLFVYRAGSYGNGLPHPYTSREQWASSPGLAESFRLKYSRFESAIGAHTGYQWYPRYAVIRVNGGVDFRVVKNFYDKDNNQPFDLTVKEQLNWTSINSFWTSVSFDGRDFAYDPSSGWFLGQRCTFNGLVPFLEKEHSFRSDTKAEFYVTLLNYPVSAVWNLKFVLAFYTGVSVQTYYGRRKSENGKGNGVRSGALVIDGVLVGRGWSEDAKKNTGDLLLHHWIEFRWPLAHGIVSFDFFFDAAMVYNIESQSPNGSSSASSSSSSSSSSSRTTSSEGLYKMSYGPGLRFTLPQFPLKLAFANTFTSPGGIPKTKKNWNFVLSFTVNNL</sequence>
<keyword id="KW-0998">Cell outer membrane</keyword>
<keyword id="KW-0472">Membrane</keyword>
<keyword id="KW-1185">Reference proteome</keyword>
<keyword id="KW-0677">Repeat</keyword>
<keyword id="KW-0732">Signal</keyword>
<keyword id="KW-0812">Transmembrane</keyword>
<keyword id="KW-1134">Transmembrane beta strand</keyword>
<dbReference type="EMBL" id="AE000520">
    <property type="protein sequence ID" value="AAC65313.1"/>
    <property type="status" value="ALT_INIT"/>
    <property type="molecule type" value="Genomic_DNA"/>
</dbReference>
<dbReference type="EMBL" id="CP004010">
    <property type="protein sequence ID" value="AGN75525.1"/>
    <property type="status" value="ALT_INIT"/>
    <property type="molecule type" value="Genomic_DNA"/>
</dbReference>
<dbReference type="PIR" id="A71339">
    <property type="entry name" value="A71339"/>
</dbReference>
<dbReference type="SMR" id="O83346"/>
<dbReference type="STRING" id="243276.TP_0326"/>
<dbReference type="EnsemblBacteria" id="AAC65313">
    <property type="protein sequence ID" value="AAC65313"/>
    <property type="gene ID" value="TP_0326"/>
</dbReference>
<dbReference type="GeneID" id="93876106"/>
<dbReference type="KEGG" id="tpa:TP_0326"/>
<dbReference type="KEGG" id="tpw:TPANIC_0326"/>
<dbReference type="PATRIC" id="fig|243276.9.peg.324"/>
<dbReference type="eggNOG" id="COG4775">
    <property type="taxonomic scope" value="Bacteria"/>
</dbReference>
<dbReference type="HOGENOM" id="CLU_007664_1_1_12"/>
<dbReference type="OrthoDB" id="9776356at2"/>
<dbReference type="Proteomes" id="UP000000811">
    <property type="component" value="Chromosome"/>
</dbReference>
<dbReference type="GO" id="GO:0009279">
    <property type="term" value="C:cell outer membrane"/>
    <property type="evidence" value="ECO:0007669"/>
    <property type="project" value="UniProtKB-SubCell"/>
</dbReference>
<dbReference type="GO" id="GO:0071709">
    <property type="term" value="P:membrane assembly"/>
    <property type="evidence" value="ECO:0007669"/>
    <property type="project" value="InterPro"/>
</dbReference>
<dbReference type="Gene3D" id="3.10.20.310">
    <property type="entry name" value="membrane protein fhac"/>
    <property type="match status" value="5"/>
</dbReference>
<dbReference type="Gene3D" id="2.40.160.50">
    <property type="entry name" value="membrane protein fhac: a member of the omp85/tpsb transporter family"/>
    <property type="match status" value="1"/>
</dbReference>
<dbReference type="InterPro" id="IPR000184">
    <property type="entry name" value="Bac_surfAg_D15"/>
</dbReference>
<dbReference type="InterPro" id="IPR010827">
    <property type="entry name" value="BamA/TamA_POTRA"/>
</dbReference>
<dbReference type="InterPro" id="IPR039910">
    <property type="entry name" value="D15-like"/>
</dbReference>
<dbReference type="InterPro" id="IPR023707">
    <property type="entry name" value="OM_assembly_BamA"/>
</dbReference>
<dbReference type="InterPro" id="IPR034746">
    <property type="entry name" value="POTRA"/>
</dbReference>
<dbReference type="NCBIfam" id="TIGR03303">
    <property type="entry name" value="OM_YaeT"/>
    <property type="match status" value="1"/>
</dbReference>
<dbReference type="PANTHER" id="PTHR12815:SF18">
    <property type="entry name" value="SORTING AND ASSEMBLY MACHINERY COMPONENT 50 HOMOLOG"/>
    <property type="match status" value="1"/>
</dbReference>
<dbReference type="PANTHER" id="PTHR12815">
    <property type="entry name" value="SORTING AND ASSEMBLY MACHINERY SAMM50 PROTEIN FAMILY MEMBER"/>
    <property type="match status" value="1"/>
</dbReference>
<dbReference type="Pfam" id="PF01103">
    <property type="entry name" value="Omp85"/>
    <property type="match status" value="1"/>
</dbReference>
<dbReference type="Pfam" id="PF07244">
    <property type="entry name" value="POTRA"/>
    <property type="match status" value="4"/>
</dbReference>
<dbReference type="PIRSF" id="PIRSF006076">
    <property type="entry name" value="OM_assembly_OMP85"/>
    <property type="match status" value="1"/>
</dbReference>
<dbReference type="PROSITE" id="PS51779">
    <property type="entry name" value="POTRA"/>
    <property type="match status" value="5"/>
</dbReference>
<organism>
    <name type="scientific">Treponema pallidum (strain Nichols)</name>
    <dbReference type="NCBI Taxonomy" id="243276"/>
    <lineage>
        <taxon>Bacteria</taxon>
        <taxon>Pseudomonadati</taxon>
        <taxon>Spirochaetota</taxon>
        <taxon>Spirochaetia</taxon>
        <taxon>Spirochaetales</taxon>
        <taxon>Treponemataceae</taxon>
        <taxon>Treponema</taxon>
    </lineage>
</organism>
<protein>
    <recommendedName>
        <fullName evidence="12">Putative outer membrane protein assembly factor TP_0326</fullName>
    </recommendedName>
    <alternativeName>
        <fullName evidence="9">TP_92</fullName>
    </alternativeName>
</protein>
<proteinExistence type="evidence at protein level"/>
<name>TP326_TREPA</name>
<gene>
    <name type="primary">tp92</name>
    <name type="ordered locus">TP_0326</name>
    <name type="ORF">TPANIC_0326</name>
</gene>
<accession>O83346</accession>
<feature type="signal peptide" evidence="2">
    <location>
        <begin position="1"/>
        <end position="21"/>
    </location>
</feature>
<feature type="chain" id="PRO_5004161024" description="Putative outer membrane protein assembly factor TP_0326">
    <location>
        <begin position="22"/>
        <end position="837"/>
    </location>
</feature>
<feature type="topological domain" description="Periplasmic" evidence="11">
    <location>
        <begin position="22"/>
        <end position="433"/>
    </location>
</feature>
<feature type="transmembrane region" description="Beta stranded; Name=1" evidence="10">
    <location>
        <begin position="434"/>
        <end position="442"/>
    </location>
</feature>
<feature type="topological domain" description="Extracellular; loop L1" evidence="11">
    <location>
        <begin position="443"/>
        <end position="450"/>
    </location>
</feature>
<feature type="transmembrane region" description="Beta stranded; Name=2" evidence="10">
    <location>
        <begin position="451"/>
        <end position="461"/>
    </location>
</feature>
<feature type="topological domain" description="Periplasmic" evidence="11">
    <location>
        <begin position="462"/>
        <end position="468"/>
    </location>
</feature>
<feature type="transmembrane region" description="Beta stranded; Name=3" evidence="10">
    <location>
        <begin position="469"/>
        <end position="476"/>
    </location>
</feature>
<feature type="topological domain" description="Extracellular; loop L2" evidence="11">
    <location>
        <begin position="477"/>
        <end position="478"/>
    </location>
</feature>
<feature type="transmembrane region" description="Beta stranded; Name=4" evidence="10">
    <location>
        <begin position="479"/>
        <end position="489"/>
    </location>
</feature>
<feature type="topological domain" description="Periplasmic" evidence="11">
    <location>
        <begin position="490"/>
        <end position="499"/>
    </location>
</feature>
<feature type="transmembrane region" description="Beta stranded; Name=5" evidence="10">
    <location>
        <begin position="500"/>
        <end position="520"/>
    </location>
</feature>
<feature type="topological domain" description="Extracellular; loop L3" evidence="11">
    <location>
        <begin position="521"/>
        <end position="530"/>
    </location>
</feature>
<feature type="transmembrane region" description="Beta stranded; Name=6" evidence="10">
    <location>
        <begin position="531"/>
        <end position="543"/>
    </location>
</feature>
<feature type="topological domain" description="Periplasmic" evidence="11">
    <location>
        <begin position="544"/>
        <end position="554"/>
    </location>
</feature>
<feature type="transmembrane region" description="Beta stranded; Name=7" evidence="10">
    <location>
        <begin position="555"/>
        <end position="568"/>
    </location>
</feature>
<feature type="topological domain" description="Extracellular; loop L4" evidence="13">
    <location>
        <begin position="569"/>
        <end position="601"/>
    </location>
</feature>
<feature type="transmembrane region" description="Beta stranded; Name=8" evidence="10">
    <location>
        <begin position="602"/>
        <end position="615"/>
    </location>
</feature>
<feature type="topological domain" description="Periplasmic" evidence="11">
    <location>
        <begin position="616"/>
        <end position="623"/>
    </location>
</feature>
<feature type="transmembrane region" description="Beta stranded; Name=9" evidence="10">
    <location>
        <begin position="624"/>
        <end position="636"/>
    </location>
</feature>
<feature type="topological domain" description="Extracellular; loop L5" evidence="11">
    <location>
        <begin position="637"/>
        <end position="644"/>
    </location>
</feature>
<feature type="transmembrane region" description="Beta stranded; Name=10" evidence="10">
    <location>
        <begin position="645"/>
        <end position="658"/>
    </location>
</feature>
<feature type="topological domain" description="Periplasmic" evidence="11">
    <location>
        <begin position="659"/>
        <end position="667"/>
    </location>
</feature>
<feature type="transmembrane region" description="Beta stranded; Name=11" evidence="10">
    <location>
        <begin position="668"/>
        <end position="682"/>
    </location>
</feature>
<feature type="topological domain" description="Extracellular; loop L6" evidence="11">
    <location>
        <begin position="683"/>
        <end position="724"/>
    </location>
</feature>
<feature type="transmembrane region" description="Beta stranded; Name=12" evidence="10">
    <location>
        <begin position="725"/>
        <end position="736"/>
    </location>
</feature>
<feature type="topological domain" description="Periplasmic" evidence="11">
    <location>
        <begin position="737"/>
        <end position="741"/>
    </location>
</feature>
<feature type="transmembrane region" description="Beta stranded; Name=13" evidence="10">
    <location>
        <begin position="742"/>
        <end position="756"/>
    </location>
</feature>
<feature type="topological domain" description="Extracellular; loop L7" evidence="11">
    <location>
        <begin position="757"/>
        <end position="786"/>
    </location>
</feature>
<feature type="transmembrane region" description="Beta stranded; Name=14" evidence="10">
    <location>
        <begin position="787"/>
        <end position="799"/>
    </location>
</feature>
<feature type="topological domain" description="Periplasmic" evidence="11">
    <location>
        <begin position="800"/>
        <end position="802"/>
    </location>
</feature>
<feature type="transmembrane region" description="Beta stranded; Name=15" evidence="10">
    <location>
        <begin position="803"/>
        <end position="814"/>
    </location>
</feature>
<feature type="topological domain" description="Extracellular; loop L8" evidence="11">
    <location>
        <begin position="815"/>
        <end position="824"/>
    </location>
</feature>
<feature type="transmembrane region" description="Beta stranded; Name=16" evidence="10">
    <location>
        <begin position="825"/>
        <end position="829"/>
    </location>
</feature>
<feature type="topological domain" description="Periplasmic" evidence="11">
    <location>
        <begin position="830"/>
        <end position="837"/>
    </location>
</feature>
<feature type="domain" description="POTRA 1" evidence="3 12">
    <location>
        <begin position="31"/>
        <end position="105"/>
    </location>
</feature>
<feature type="domain" description="POTRA 2" evidence="3">
    <location>
        <begin position="106"/>
        <end position="182"/>
    </location>
</feature>
<feature type="domain" description="POTRA 3" evidence="3">
    <location>
        <begin position="185"/>
        <end position="273"/>
    </location>
</feature>
<feature type="domain" description="POTRA 4" evidence="3">
    <location>
        <begin position="276"/>
        <end position="354"/>
    </location>
</feature>
<feature type="domain" description="POTRA 5" evidence="3">
    <location>
        <begin position="357"/>
        <end position="430"/>
    </location>
</feature>
<feature type="region of interest" description="Disordered" evidence="4">
    <location>
        <begin position="761"/>
        <end position="785"/>
    </location>
</feature>
<feature type="compositionally biased region" description="Low complexity" evidence="4">
    <location>
        <begin position="765"/>
        <end position="784"/>
    </location>
</feature>
<comment type="function">
    <text evidence="1">Might be part of the outer membrane protein assembly complex, which is involved in assembly and insertion of beta-barrel proteins into the outer membrane.</text>
</comment>
<comment type="function">
    <text evidence="6 8">Both rabbit immune serum and rabbit antiserum specific for extracytoplasmic loop L4 promote bacteria internalization by rabbit peritoneal macrophages. Pools of human syphilitic sera from the USA and Columbia recognize both the N-terminal POTRA-containing and C-terminal beta-barrel domains as well as loop L4, showing this protein stimulates the immune system in both humans and rabbits (PubMed:25825429).</text>
</comment>
<comment type="subunit">
    <text evidence="6">Part of 2 complexes of about 239 and 164 kDa.</text>
</comment>
<comment type="subcellular location">
    <subcellularLocation>
        <location evidence="6 8">Cell outer membrane</location>
    </subcellularLocation>
    <text evidence="6 8">The C-terminal beta-barrel domain is exposed on the outer surface of the outer membrane (PubMed:21488980). Antibody labeling by antisera to either the periplasmic or membrane domain occurs in a punctate fashion over the length of the spirochete; detection by periplasmic POTRA-domain-specific antibodies only occurs after mild detergent solubilization (PubMed:25825429).</text>
</comment>
<comment type="induction">
    <text evidence="6">Transcribed at low levels, estimated to be present at about 100 molecules per cell (at protein level).</text>
</comment>
<comment type="domain">
    <text evidence="6">The N-terminus (residues 22-369) partitions into an aqueous phase and is predicted to be periplasmic, while the C-terminus (residues 426-837) partitions into Triton X-114 and has the hallmarks of a beta-stranded protein, suggesting it is membraneous.</text>
</comment>
<comment type="biotechnology">
    <text evidence="5 7">Recognized by sera from 42/43 syphilis patients, it shows promise as a diagnostic antigen (PubMed:12904373). In further diagnostic tests for syphilis this protein exhibits a sensitivity of 86% and a specificity of 99%. A fusion with TP0453 (residues 32-287 of TP0453 fused N-terminally to residues 38-450 of TP0326) exhibits a sensitivity of 98% and a specificity of 99%, and exhibits superior accuracy in classifying analytical false-positive samples than a commericially available test, making it a better candiate for diagnosis (PubMed:23100335).</text>
</comment>
<comment type="miscellaneous">
    <text evidence="11">The outer membrane of T.pallidum has no lipopolysaccharides, few proteins and is a fluid and very fragile bilayer. Its lack of surface antigenicity is thought to contribute to the ability of the pathogen to evade the human immune system.</text>
</comment>
<comment type="similarity">
    <text evidence="11">Belongs to the BamA family.</text>
</comment>
<comment type="sequence caution" evidence="11">
    <conflict type="erroneous initiation">
        <sequence resource="EMBL-CDS" id="AAC65313"/>
    </conflict>
    <text>Extended N-terminus.</text>
</comment>
<comment type="sequence caution" evidence="11">
    <conflict type="erroneous initiation">
        <sequence resource="EMBL-CDS" id="AGN75525"/>
    </conflict>
    <text>Extended N-terminus.</text>
</comment>